<feature type="chain" id="PRO_0000259701" description="PF03932 family protein CutC">
    <location>
        <begin position="1"/>
        <end position="209"/>
    </location>
</feature>
<gene>
    <name evidence="1" type="primary">cutC</name>
    <name type="ordered locus">M6_Spy0363</name>
</gene>
<sequence>MIKEFCAENLTLLPTLDAGQVSRVELCDNLAVGGTTPSYGVIKEACQLLHDKKISVATMIRPRGGDFVYNDLELKAMEEDILKAVEAGSDALVLGLLTTENQLDTDAIEQLLPATQGLPLVFHMAFDHIPTDHQHQALDQLIDYGFVRVLTHGSPEATPITDNVEQLKSLVTYANKRIEIMIGGGVTAENCQNLSQLTGTAIVHGTKII</sequence>
<reference evidence="4" key="1">
    <citation type="journal article" date="2004" name="J. Infect. Dis.">
        <title>Progress toward characterization of the group A Streptococcus metagenome: complete genome sequence of a macrolide-resistant serotype M6 strain.</title>
        <authorList>
            <person name="Banks D.J."/>
            <person name="Porcella S.F."/>
            <person name="Barbian K.D."/>
            <person name="Beres S.B."/>
            <person name="Philips L.E."/>
            <person name="Voyich J.M."/>
            <person name="DeLeo F.R."/>
            <person name="Martin J.M."/>
            <person name="Somerville G.A."/>
            <person name="Musser J.M."/>
        </authorList>
    </citation>
    <scope>NUCLEOTIDE SEQUENCE [LARGE SCALE GENOMIC DNA]</scope>
    <source>
        <strain>ATCC BAA-946 / MGAS10394</strain>
    </source>
</reference>
<reference evidence="3" key="2">
    <citation type="submission" date="2000-05" db="UniProtKB">
        <title>Two-dimensional gel electrophoresis map of Streptococcus pyogenes proteins.</title>
        <authorList>
            <person name="Hogan D.A."/>
            <person name="Du P."/>
            <person name="Stevenson T.I."/>
            <person name="Whitton M."/>
            <person name="Kilby G.W."/>
            <person name="Rogers J."/>
            <person name="VanBogelen R.A."/>
        </authorList>
    </citation>
    <scope>PROTEIN SEQUENCE OF 54-75 AND 149-168</scope>
    <scope>MASS SPECTROMETRY</scope>
    <source>
        <strain evidence="2">JRS4 / Serotype M6</strain>
    </source>
</reference>
<accession>Q5XDL5</accession>
<accession>P82555</accession>
<dbReference type="EMBL" id="CP000003">
    <property type="protein sequence ID" value="AAT86498.1"/>
    <property type="molecule type" value="Genomic_DNA"/>
</dbReference>
<dbReference type="RefSeq" id="WP_011017427.1">
    <property type="nucleotide sequence ID" value="NC_006086.1"/>
</dbReference>
<dbReference type="SMR" id="Q5XDL5"/>
<dbReference type="KEGG" id="spa:M6_Spy0363"/>
<dbReference type="HOGENOM" id="CLU_050555_2_0_9"/>
<dbReference type="Proteomes" id="UP000001167">
    <property type="component" value="Chromosome"/>
</dbReference>
<dbReference type="GO" id="GO:0005737">
    <property type="term" value="C:cytoplasm"/>
    <property type="evidence" value="ECO:0007669"/>
    <property type="project" value="UniProtKB-SubCell"/>
</dbReference>
<dbReference type="GO" id="GO:0005507">
    <property type="term" value="F:copper ion binding"/>
    <property type="evidence" value="ECO:0007669"/>
    <property type="project" value="TreeGrafter"/>
</dbReference>
<dbReference type="FunFam" id="3.20.20.380:FF:000003">
    <property type="entry name" value="Copper homeostasis protein CutC"/>
    <property type="match status" value="1"/>
</dbReference>
<dbReference type="Gene3D" id="3.20.20.380">
    <property type="entry name" value="Copper homeostasis (CutC) domain"/>
    <property type="match status" value="1"/>
</dbReference>
<dbReference type="HAMAP" id="MF_00795">
    <property type="entry name" value="CutC"/>
    <property type="match status" value="1"/>
</dbReference>
<dbReference type="InterPro" id="IPR005627">
    <property type="entry name" value="CutC-like"/>
</dbReference>
<dbReference type="InterPro" id="IPR036822">
    <property type="entry name" value="CutC-like_dom_sf"/>
</dbReference>
<dbReference type="PANTHER" id="PTHR12598">
    <property type="entry name" value="COPPER HOMEOSTASIS PROTEIN CUTC"/>
    <property type="match status" value="1"/>
</dbReference>
<dbReference type="PANTHER" id="PTHR12598:SF0">
    <property type="entry name" value="COPPER HOMEOSTASIS PROTEIN CUTC HOMOLOG"/>
    <property type="match status" value="1"/>
</dbReference>
<dbReference type="Pfam" id="PF03932">
    <property type="entry name" value="CutC"/>
    <property type="match status" value="1"/>
</dbReference>
<dbReference type="SUPFAM" id="SSF110395">
    <property type="entry name" value="CutC-like"/>
    <property type="match status" value="1"/>
</dbReference>
<organism>
    <name type="scientific">Streptococcus pyogenes serotype M6 (strain ATCC BAA-946 / MGAS10394)</name>
    <dbReference type="NCBI Taxonomy" id="286636"/>
    <lineage>
        <taxon>Bacteria</taxon>
        <taxon>Bacillati</taxon>
        <taxon>Bacillota</taxon>
        <taxon>Bacilli</taxon>
        <taxon>Lactobacillales</taxon>
        <taxon>Streptococcaceae</taxon>
        <taxon>Streptococcus</taxon>
    </lineage>
</organism>
<name>CUTC_STRP6</name>
<evidence type="ECO:0000255" key="1">
    <source>
        <dbReference type="HAMAP-Rule" id="MF_00795"/>
    </source>
</evidence>
<evidence type="ECO:0000269" key="2">
    <source ref="2"/>
</evidence>
<evidence type="ECO:0000305" key="3"/>
<evidence type="ECO:0000312" key="4">
    <source>
        <dbReference type="EMBL" id="AAT86498.1"/>
    </source>
</evidence>
<keyword id="KW-0963">Cytoplasm</keyword>
<keyword id="KW-0903">Direct protein sequencing</keyword>
<protein>
    <recommendedName>
        <fullName evidence="1">PF03932 family protein CutC</fullName>
    </recommendedName>
</protein>
<comment type="subcellular location">
    <subcellularLocation>
        <location evidence="1">Cytoplasm</location>
    </subcellularLocation>
</comment>
<comment type="mass spectrometry"/>
<comment type="similarity">
    <text evidence="1 3">Belongs to the CutC family.</text>
</comment>
<comment type="caution">
    <text evidence="1">Once thought to be involved in copper homeostasis, experiments in E.coli have shown this is not the case.</text>
</comment>
<proteinExistence type="evidence at protein level"/>